<evidence type="ECO:0000250" key="1"/>
<evidence type="ECO:0000256" key="2">
    <source>
        <dbReference type="SAM" id="MobiDB-lite"/>
    </source>
</evidence>
<evidence type="ECO:0000305" key="3"/>
<accession>Q16U49</accession>
<keyword id="KW-0010">Activator</keyword>
<keyword id="KW-0539">Nucleus</keyword>
<keyword id="KW-1185">Reference proteome</keyword>
<keyword id="KW-0677">Repeat</keyword>
<keyword id="KW-0804">Transcription</keyword>
<keyword id="KW-0805">Transcription regulation</keyword>
<feature type="chain" id="PRO_0000304586" description="Mediator of RNA polymerase II transcription subunit 14">
    <location>
        <begin position="1"/>
        <end position="1578"/>
    </location>
</feature>
<feature type="region of interest" description="Disordered" evidence="2">
    <location>
        <begin position="561"/>
        <end position="582"/>
    </location>
</feature>
<feature type="region of interest" description="Disordered" evidence="2">
    <location>
        <begin position="1009"/>
        <end position="1173"/>
    </location>
</feature>
<feature type="region of interest" description="Disordered" evidence="2">
    <location>
        <begin position="1510"/>
        <end position="1578"/>
    </location>
</feature>
<feature type="short sequence motif" description="LXXLL motif 1">
    <location>
        <begin position="49"/>
        <end position="53"/>
    </location>
</feature>
<feature type="short sequence motif" description="LXXLL motif 2">
    <location>
        <begin position="739"/>
        <end position="743"/>
    </location>
</feature>
<feature type="compositionally biased region" description="Low complexity" evidence="2">
    <location>
        <begin position="565"/>
        <end position="580"/>
    </location>
</feature>
<feature type="compositionally biased region" description="Polar residues" evidence="2">
    <location>
        <begin position="1084"/>
        <end position="1093"/>
    </location>
</feature>
<feature type="compositionally biased region" description="Pro residues" evidence="2">
    <location>
        <begin position="1095"/>
        <end position="1104"/>
    </location>
</feature>
<feature type="compositionally biased region" description="Pro residues" evidence="2">
    <location>
        <begin position="1157"/>
        <end position="1167"/>
    </location>
</feature>
<feature type="compositionally biased region" description="Gly residues" evidence="2">
    <location>
        <begin position="1510"/>
        <end position="1521"/>
    </location>
</feature>
<feature type="compositionally biased region" description="Gly residues" evidence="2">
    <location>
        <begin position="1547"/>
        <end position="1578"/>
    </location>
</feature>
<dbReference type="EMBL" id="CH477632">
    <property type="protein sequence ID" value="EAT38036.1"/>
    <property type="status" value="ALT_INIT"/>
    <property type="molecule type" value="Genomic_DNA"/>
</dbReference>
<dbReference type="RefSeq" id="XP_001660571.1">
    <property type="nucleotide sequence ID" value="XM_001660521.1"/>
</dbReference>
<dbReference type="SMR" id="Q16U49"/>
<dbReference type="FunCoup" id="Q16U49">
    <property type="interactions" value="2150"/>
</dbReference>
<dbReference type="STRING" id="7159.Q16U49"/>
<dbReference type="PaxDb" id="7159-AAEL010020-PA"/>
<dbReference type="VEuPathDB" id="VectorBase:AAEL014851"/>
<dbReference type="eggNOG" id="KOG1875">
    <property type="taxonomic scope" value="Eukaryota"/>
</dbReference>
<dbReference type="HOGENOM" id="CLU_001928_0_0_1"/>
<dbReference type="InParanoid" id="Q16U49"/>
<dbReference type="OMA" id="NTRKCTM"/>
<dbReference type="OrthoDB" id="205099at2759"/>
<dbReference type="Proteomes" id="UP000008820">
    <property type="component" value="Unassembled WGS sequence"/>
</dbReference>
<dbReference type="Proteomes" id="UP000682892">
    <property type="component" value="Unassembled WGS sequence"/>
</dbReference>
<dbReference type="GO" id="GO:0070847">
    <property type="term" value="C:core mediator complex"/>
    <property type="evidence" value="ECO:0007669"/>
    <property type="project" value="TreeGrafter"/>
</dbReference>
<dbReference type="GO" id="GO:0016592">
    <property type="term" value="C:mediator complex"/>
    <property type="evidence" value="ECO:0007669"/>
    <property type="project" value="InterPro"/>
</dbReference>
<dbReference type="GO" id="GO:0003712">
    <property type="term" value="F:transcription coregulator activity"/>
    <property type="evidence" value="ECO:0007669"/>
    <property type="project" value="InterPro"/>
</dbReference>
<dbReference type="GO" id="GO:0006357">
    <property type="term" value="P:regulation of transcription by RNA polymerase II"/>
    <property type="evidence" value="ECO:0007669"/>
    <property type="project" value="InterPro"/>
</dbReference>
<dbReference type="InterPro" id="IPR056877">
    <property type="entry name" value="Med14_C"/>
</dbReference>
<dbReference type="InterPro" id="IPR055122">
    <property type="entry name" value="Med14_N"/>
</dbReference>
<dbReference type="InterPro" id="IPR055113">
    <property type="entry name" value="Med14_RM2"/>
</dbReference>
<dbReference type="InterPro" id="IPR055114">
    <property type="entry name" value="Med14_RM6"/>
</dbReference>
<dbReference type="InterPro" id="IPR055107">
    <property type="entry name" value="Med14_RM8"/>
</dbReference>
<dbReference type="InterPro" id="IPR013947">
    <property type="entry name" value="Mediator_Med14"/>
</dbReference>
<dbReference type="InterPro" id="IPR056879">
    <property type="entry name" value="RM3_Med14"/>
</dbReference>
<dbReference type="InterPro" id="IPR056878">
    <property type="entry name" value="RM5_Med14"/>
</dbReference>
<dbReference type="PANTHER" id="PTHR12809">
    <property type="entry name" value="MEDIATOR COMPLEX SUBUNIT"/>
    <property type="match status" value="1"/>
</dbReference>
<dbReference type="PANTHER" id="PTHR12809:SF2">
    <property type="entry name" value="MEDIATOR OF RNA POLYMERASE II TRANSCRIPTION SUBUNIT 14"/>
    <property type="match status" value="1"/>
</dbReference>
<dbReference type="Pfam" id="PF08638">
    <property type="entry name" value="Med14"/>
    <property type="match status" value="1"/>
</dbReference>
<dbReference type="Pfam" id="PF25069">
    <property type="entry name" value="Med14_C"/>
    <property type="match status" value="1"/>
</dbReference>
<dbReference type="Pfam" id="PF22981">
    <property type="entry name" value="RM2_Med14"/>
    <property type="match status" value="1"/>
</dbReference>
<dbReference type="Pfam" id="PF25065">
    <property type="entry name" value="RM3_Med14"/>
    <property type="match status" value="1"/>
</dbReference>
<dbReference type="Pfam" id="PF25067">
    <property type="entry name" value="RM5_Med14"/>
    <property type="match status" value="2"/>
</dbReference>
<dbReference type="Pfam" id="PF22984">
    <property type="entry name" value="RM6_Med14"/>
    <property type="match status" value="1"/>
</dbReference>
<dbReference type="Pfam" id="PF22983">
    <property type="entry name" value="RM8_Med14"/>
    <property type="match status" value="1"/>
</dbReference>
<gene>
    <name type="primary">MED14</name>
    <name type="ORF">AAEL010020</name>
</gene>
<sequence>MTPQPLEQGGAVASFIPTGQEMAQRQNLIPLGRLIDFIIQRTYHELTVLAELLPRKTDMERKIEIYNFSASTRQLFIRLLALVKWANSASKVDKSAKIMAFLDKQSLLFMDTADMLSRMARETLVNARLPNFHIPAAVEILTTGTYSRLPSIIRERIVPPDPITTLEKRQTLQRLNQVIQHRLVTGNLLPQLRKFKIENGRVTFKVDHEFEVSLTVMGDGPNIPWRLLDIDILVEDKETGDGKALVHTLQVNYIHQLIQGRIVDSPDALAEVYNCLHYFCQSLQLEVLYTQTLRLMRDRLDDHIHVDEYIPGTKLTVSYWRELTNKDPKSELGYRLMIQTDQSDTTKQLAILHLPSIGTKEVDIADRAVRSELLSMERLLVHTVYVRSLARLGDLKTELQLFLKDVDYSIQGTPAMLLVPVLNPCLRAEHIYITVDTHTGMLRCHVPKHLDCPIMPELQHALNNDRSKLQHLFSELRYWITQRRCEKTLQHLPATTQERLPLVFPADHPIEKIGPHRVYIQMCRHANVILIVELKEKESSPNEMTYTFYLVLVKPSSMEDSQSVTAGGTSQSSAPSAATTESDGMPKMYLKVLSLIEFDTFVATHGPGTYVDEQTVGSKRKLLTGEGPSAKQSKTIYPAYFIPELAHVVAMCDEKLPFVALAKDLTRRKIPHGGVQVEANATSLVLKLLTLPQPKPPVIPVSSSAAAAAAAQSGPDQKPPEPKVVSVPKIDKDVWNALLKRLLSVSVRAQINKSIQTRMWTVELVFYGTPLASAHHKEQGMRRAVYLTYDMLPVDSVDKFVDMILNDWSKIVYLYTLVHDFREQIKNDKYNLHNIVTIKSYSYTSLLLAYGPNKEVNVNIYWDTEAKEFKMVFTGGNNAINAHSMMRDQLQAHLNHNYDLAQIVYLLHETYQPLSSIAKLPIIPHLAILQSPKIPVLSFCIIPQSPTLLRISFQGVYCLEVRLRGSGLCSIRDGAYSRFDRSHVVEEFTPTQGLKGFLSKYVDETAVYRRRSQSEDDNPPSPITMEDPHGGPASVGSTFLSGGAMRGPQSPRDPGLRFAAPLTPPSGSNPHTPASPHPQGIGGSQSHPNFNMTSPPAPHMPHPSPSGGLMPSSPLNPQPSPMAAHSPGPTNLPYMSGHTDSPFSAHSPAASNWPGSPGMPRPSPRPGQSPDHKAQKRLLIISLKFTAPHHNTSRVLPARSWAGAIPTLLTHEALDTLCRATIHPQKEIPGPELSPLERFLGSVFMRRQLQRIIHQEDNLTAITSNEPGVVLFKADNLQYQVFLNPNHMQSLHMKVSQAPMAPTMDGKPPYQWPPEDLQILEQFFDQRVAAPPYRPAVVTSFTRMLNLPSQVMKDFIQIMRLDLIPELGQGNKWNVQFILRMPPSATPIVPVGTTTILSHRQKILFFIQITRVPYLPNMELKDSVTMLLPMVYDMTVNHTQLAERREQIIPQLTSAVSAHLRRFVECTVLQPGECSLFPAVRDLLMNLTLPNEQPPPGQMGNQIGTMGGMAPGGPGGPGPMGGQIAPSPVGGQVVSSPNPMMHSPMQMGGGGQQSNYGGMVGGGAQSGVPGGPGAGGPN</sequence>
<proteinExistence type="inferred from homology"/>
<protein>
    <recommendedName>
        <fullName>Mediator of RNA polymerase II transcription subunit 14</fullName>
    </recommendedName>
    <alternativeName>
        <fullName>Mediator complex subunit 14</fullName>
    </alternativeName>
</protein>
<name>MED14_AEDAE</name>
<reference key="1">
    <citation type="journal article" date="2007" name="Science">
        <title>Genome sequence of Aedes aegypti, a major arbovirus vector.</title>
        <authorList>
            <person name="Nene V."/>
            <person name="Wortman J.R."/>
            <person name="Lawson D."/>
            <person name="Haas B.J."/>
            <person name="Kodira C.D."/>
            <person name="Tu Z.J."/>
            <person name="Loftus B.J."/>
            <person name="Xi Z."/>
            <person name="Megy K."/>
            <person name="Grabherr M."/>
            <person name="Ren Q."/>
            <person name="Zdobnov E.M."/>
            <person name="Lobo N.F."/>
            <person name="Campbell K.S."/>
            <person name="Brown S.E."/>
            <person name="Bonaldo M.F."/>
            <person name="Zhu J."/>
            <person name="Sinkins S.P."/>
            <person name="Hogenkamp D.G."/>
            <person name="Amedeo P."/>
            <person name="Arensburger P."/>
            <person name="Atkinson P.W."/>
            <person name="Bidwell S.L."/>
            <person name="Biedler J."/>
            <person name="Birney E."/>
            <person name="Bruggner R.V."/>
            <person name="Costas J."/>
            <person name="Coy M.R."/>
            <person name="Crabtree J."/>
            <person name="Crawford M."/>
            <person name="DeBruyn B."/>
            <person name="DeCaprio D."/>
            <person name="Eiglmeier K."/>
            <person name="Eisenstadt E."/>
            <person name="El-Dorry H."/>
            <person name="Gelbart W.M."/>
            <person name="Gomes S.L."/>
            <person name="Hammond M."/>
            <person name="Hannick L.I."/>
            <person name="Hogan J.R."/>
            <person name="Holmes M.H."/>
            <person name="Jaffe D."/>
            <person name="Johnston S.J."/>
            <person name="Kennedy R.C."/>
            <person name="Koo H."/>
            <person name="Kravitz S."/>
            <person name="Kriventseva E.V."/>
            <person name="Kulp D."/>
            <person name="Labutti K."/>
            <person name="Lee E."/>
            <person name="Li S."/>
            <person name="Lovin D.D."/>
            <person name="Mao C."/>
            <person name="Mauceli E."/>
            <person name="Menck C.F."/>
            <person name="Miller J.R."/>
            <person name="Montgomery P."/>
            <person name="Mori A."/>
            <person name="Nascimento A.L."/>
            <person name="Naveira H.F."/>
            <person name="Nusbaum C."/>
            <person name="O'Leary S.B."/>
            <person name="Orvis J."/>
            <person name="Pertea M."/>
            <person name="Quesneville H."/>
            <person name="Reidenbach K.R."/>
            <person name="Rogers Y.-H.C."/>
            <person name="Roth C.W."/>
            <person name="Schneider J.R."/>
            <person name="Schatz M."/>
            <person name="Shumway M."/>
            <person name="Stanke M."/>
            <person name="Stinson E.O."/>
            <person name="Tubio J.M.C."/>
            <person name="Vanzee J.P."/>
            <person name="Verjovski-Almeida S."/>
            <person name="Werner D."/>
            <person name="White O.R."/>
            <person name="Wyder S."/>
            <person name="Zeng Q."/>
            <person name="Zhao Q."/>
            <person name="Zhao Y."/>
            <person name="Hill C.A."/>
            <person name="Raikhel A.S."/>
            <person name="Soares M.B."/>
            <person name="Knudson D.L."/>
            <person name="Lee N.H."/>
            <person name="Galagan J."/>
            <person name="Salzberg S.L."/>
            <person name="Paulsen I.T."/>
            <person name="Dimopoulos G."/>
            <person name="Collins F.H."/>
            <person name="Bruce B."/>
            <person name="Fraser-Liggett C.M."/>
            <person name="Severson D.W."/>
        </authorList>
    </citation>
    <scope>NUCLEOTIDE SEQUENCE [LARGE SCALE GENOMIC DNA]</scope>
    <source>
        <strain>LVPib12</strain>
    </source>
</reference>
<organism>
    <name type="scientific">Aedes aegypti</name>
    <name type="common">Yellowfever mosquito</name>
    <name type="synonym">Culex aegypti</name>
    <dbReference type="NCBI Taxonomy" id="7159"/>
    <lineage>
        <taxon>Eukaryota</taxon>
        <taxon>Metazoa</taxon>
        <taxon>Ecdysozoa</taxon>
        <taxon>Arthropoda</taxon>
        <taxon>Hexapoda</taxon>
        <taxon>Insecta</taxon>
        <taxon>Pterygota</taxon>
        <taxon>Neoptera</taxon>
        <taxon>Endopterygota</taxon>
        <taxon>Diptera</taxon>
        <taxon>Nematocera</taxon>
        <taxon>Culicoidea</taxon>
        <taxon>Culicidae</taxon>
        <taxon>Culicinae</taxon>
        <taxon>Aedini</taxon>
        <taxon>Aedes</taxon>
        <taxon>Stegomyia</taxon>
    </lineage>
</organism>
<comment type="function">
    <text evidence="1">Component of the Mediator complex, a coactivator involved in the regulated transcription of nearly all RNA polymerase II-dependent genes. Mediator functions as a bridge to convey information from gene-specific regulatory proteins to the basal RNA polymerase II transcription machinery. Mediator is recruited to promoters by direct interactions with regulatory proteins and serves as a scaffold for the assembly of a functional preinitiation complex with RNA polymerase II and the general transcription factors (By similarity).</text>
</comment>
<comment type="subunit">
    <text evidence="1">Component of the Mediator complex.</text>
</comment>
<comment type="subcellular location">
    <subcellularLocation>
        <location evidence="3">Nucleus</location>
    </subcellularLocation>
</comment>
<comment type="similarity">
    <text evidence="3">Belongs to the Mediator complex subunit 14 family.</text>
</comment>
<comment type="sequence caution" evidence="3">
    <conflict type="erroneous initiation">
        <sequence resource="EMBL-CDS" id="EAT38036"/>
    </conflict>
</comment>